<comment type="function">
    <text evidence="5 8">RNA-binding protein involved in pre-mRNA splicing. As a component of the minor spliceosome, involved in the splicing of U12-type introns in pre-mRNAs (Probable).</text>
</comment>
<comment type="subunit">
    <text evidence="3 4 5 6">Component of the minor spliceosome, which splices U12-type introns (PubMed:33509932). Interacts with PRKX (PubMed:16491121). Interacts with DHX16 (PubMed:25296192). Interacts with PRKACB (PubMed:21880142).</text>
</comment>
<comment type="interaction">
    <interactant intactId="EBI-746309">
        <id>Q92917</id>
    </interactant>
    <interactant intactId="EBI-2843626">
        <id>Q9P291</id>
        <label>ARMCX1</label>
    </interactant>
    <organismsDiffer>false</organismsDiffer>
    <experiments>3</experiments>
</comment>
<comment type="interaction">
    <interactant intactId="EBI-746309">
        <id>Q92917</id>
    </interactant>
    <interactant intactId="EBI-2561235">
        <id>Q9BRD0</id>
        <label>BUD13</label>
    </interactant>
    <organismsDiffer>false</organismsDiffer>
    <experiments>13</experiments>
</comment>
<comment type="interaction">
    <interactant intactId="EBI-746309">
        <id>Q92917</id>
    </interactant>
    <interactant intactId="EBI-2808286">
        <id>Q2TAC2</id>
        <label>CCDC57</label>
    </interactant>
    <organismsDiffer>false</organismsDiffer>
    <experiments>3</experiments>
</comment>
<comment type="interaction">
    <interactant intactId="EBI-746309">
        <id>Q92917</id>
    </interactant>
    <interactant intactId="EBI-10253274">
        <id>Q6P9H4</id>
        <label>CNKSR3</label>
    </interactant>
    <organismsDiffer>false</organismsDiffer>
    <experiments>3</experiments>
</comment>
<comment type="interaction">
    <interactant intactId="EBI-746309">
        <id>Q92917</id>
    </interactant>
    <interactant intactId="EBI-742054">
        <id>Q96D03</id>
        <label>DDIT4L</label>
    </interactant>
    <organismsDiffer>false</organismsDiffer>
    <experiments>3</experiments>
</comment>
<comment type="interaction">
    <interactant intactId="EBI-746309">
        <id>Q92917</id>
    </interactant>
    <interactant intactId="EBI-311446">
        <id>O60231</id>
        <label>DHX16</label>
    </interactant>
    <organismsDiffer>false</organismsDiffer>
    <experiments>6</experiments>
</comment>
<comment type="interaction">
    <interactant intactId="EBI-746309">
        <id>Q92917</id>
    </interactant>
    <interactant intactId="EBI-1043041">
        <id>Q92620</id>
        <label>DHX38</label>
    </interactant>
    <organismsDiffer>false</organismsDiffer>
    <experiments>2</experiments>
</comment>
<comment type="interaction">
    <interactant intactId="EBI-746309">
        <id>Q92917</id>
    </interactant>
    <interactant intactId="EBI-2349927">
        <id>Q5JST6</id>
        <label>EFHC2</label>
    </interactant>
    <organismsDiffer>false</organismsDiffer>
    <experiments>3</experiments>
</comment>
<comment type="interaction">
    <interactant intactId="EBI-746309">
        <id>Q92917</id>
    </interactant>
    <interactant intactId="EBI-750953">
        <id>Q96IJ6</id>
        <label>GMPPA</label>
    </interactant>
    <organismsDiffer>false</organismsDiffer>
    <experiments>3</experiments>
</comment>
<comment type="interaction">
    <interactant intactId="EBI-746309">
        <id>Q92917</id>
    </interactant>
    <interactant intactId="EBI-618309">
        <id>Q08379</id>
        <label>GOLGA2</label>
    </interactant>
    <organismsDiffer>false</organismsDiffer>
    <experiments>9</experiments>
</comment>
<comment type="interaction">
    <interactant intactId="EBI-746309">
        <id>Q92917</id>
    </interactant>
    <interactant intactId="EBI-4312072">
        <id>P46439</id>
        <label>GSTM5</label>
    </interactant>
    <organismsDiffer>false</organismsDiffer>
    <experiments>3</experiments>
</comment>
<comment type="interaction">
    <interactant intactId="EBI-746309">
        <id>Q92917</id>
    </interactant>
    <interactant intactId="EBI-357966">
        <id>P07910</id>
        <label>HNRNPC</label>
    </interactant>
    <organismsDiffer>false</organismsDiffer>
    <experiments>3</experiments>
</comment>
<comment type="interaction">
    <interactant intactId="EBI-746309">
        <id>Q92917</id>
    </interactant>
    <interactant intactId="EBI-10961706">
        <id>Q96ED9-2</id>
        <label>HOOK2</label>
    </interactant>
    <organismsDiffer>false</organismsDiffer>
    <experiments>3</experiments>
</comment>
<comment type="interaction">
    <interactant intactId="EBI-746309">
        <id>Q92917</id>
    </interactant>
    <interactant intactId="EBI-7116203">
        <id>O75031</id>
        <label>HSF2BP</label>
    </interactant>
    <organismsDiffer>false</organismsDiffer>
    <experiments>3</experiments>
</comment>
<comment type="interaction">
    <interactant intactId="EBI-746309">
        <id>Q92917</id>
    </interactant>
    <interactant intactId="EBI-81279">
        <id>Q9Y6K9</id>
        <label>IKBKG</label>
    </interactant>
    <organismsDiffer>false</organismsDiffer>
    <experiments>3</experiments>
</comment>
<comment type="interaction">
    <interactant intactId="EBI-746309">
        <id>Q92917</id>
    </interactant>
    <interactant intactId="EBI-2556193">
        <id>Q63ZY3</id>
        <label>KANK2</label>
    </interactant>
    <organismsDiffer>false</organismsDiffer>
    <experiments>3</experiments>
</comment>
<comment type="interaction">
    <interactant intactId="EBI-746309">
        <id>Q92917</id>
    </interactant>
    <interactant intactId="EBI-739832">
        <id>Q8TBB1</id>
        <label>LNX1</label>
    </interactant>
    <organismsDiffer>false</organismsDiffer>
    <experiments>5</experiments>
</comment>
<comment type="interaction">
    <interactant intactId="EBI-746309">
        <id>Q92917</id>
    </interactant>
    <interactant intactId="EBI-18273118">
        <id>Q9P2M1</id>
        <label>LRP2BP</label>
    </interactant>
    <organismsDiffer>false</organismsDiffer>
    <experiments>3</experiments>
</comment>
<comment type="interaction">
    <interactant intactId="EBI-746309">
        <id>Q92917</id>
    </interactant>
    <interactant intactId="EBI-1216080">
        <id>Q9Y250</id>
        <label>LZTS1</label>
    </interactant>
    <organismsDiffer>false</organismsDiffer>
    <experiments>3</experiments>
</comment>
<comment type="interaction">
    <interactant intactId="EBI-746309">
        <id>Q92917</id>
    </interactant>
    <interactant intactId="EBI-742610">
        <id>Q9Y6D9</id>
        <label>MAD1L1</label>
    </interactant>
    <organismsDiffer>false</organismsDiffer>
    <experiments>3</experiments>
</comment>
<comment type="interaction">
    <interactant intactId="EBI-746309">
        <id>Q92917</id>
    </interactant>
    <interactant intactId="EBI-16439278">
        <id>Q6FHY5</id>
        <label>MEOX2</label>
    </interactant>
    <organismsDiffer>false</organismsDiffer>
    <experiments>3</experiments>
</comment>
<comment type="interaction">
    <interactant intactId="EBI-746309">
        <id>Q92917</id>
    </interactant>
    <interactant intactId="EBI-6165891">
        <id>Q14696</id>
        <label>MESD</label>
    </interactant>
    <organismsDiffer>false</organismsDiffer>
    <experiments>3</experiments>
</comment>
<comment type="interaction">
    <interactant intactId="EBI-746309">
        <id>Q92917</id>
    </interactant>
    <interactant intactId="EBI-10172526">
        <id>Q9UJV3-2</id>
        <label>MID2</label>
    </interactant>
    <organismsDiffer>false</organismsDiffer>
    <experiments>3</experiments>
</comment>
<comment type="interaction">
    <interactant intactId="EBI-746309">
        <id>Q92917</id>
    </interactant>
    <interactant intactId="EBI-11522433">
        <id>Q5JR59-3</id>
        <label>MTUS2</label>
    </interactant>
    <organismsDiffer>false</organismsDiffer>
    <experiments>3</experiments>
</comment>
<comment type="interaction">
    <interactant intactId="EBI-746309">
        <id>Q92917</id>
    </interactant>
    <interactant intactId="EBI-530034">
        <id>O43189</id>
        <label>PHF1</label>
    </interactant>
    <organismsDiffer>false</organismsDiffer>
    <experiments>3</experiments>
</comment>
<comment type="interaction">
    <interactant intactId="EBI-746309">
        <id>Q92917</id>
    </interactant>
    <interactant intactId="EBI-14066006">
        <id>Q4G0R1</id>
        <label>PIBF1</label>
    </interactant>
    <organismsDiffer>false</organismsDiffer>
    <experiments>3</experiments>
</comment>
<comment type="interaction">
    <interactant intactId="EBI-746309">
        <id>Q92917</id>
    </interactant>
    <interactant intactId="EBI-79165">
        <id>Q9NRD5</id>
        <label>PICK1</label>
    </interactant>
    <organismsDiffer>false</organismsDiffer>
    <experiments>3</experiments>
</comment>
<comment type="interaction">
    <interactant intactId="EBI-746309">
        <id>Q92917</id>
    </interactant>
    <interactant intactId="EBI-347928">
        <id>P62487</id>
        <label>POLR2G</label>
    </interactant>
    <organismsDiffer>false</organismsDiffer>
    <experiments>3</experiments>
</comment>
<comment type="interaction">
    <interactant intactId="EBI-746309">
        <id>Q92917</id>
    </interactant>
    <interactant intactId="EBI-5258763">
        <id>P22694-2</id>
        <label>PRKACB</label>
    </interactant>
    <organismsDiffer>false</organismsDiffer>
    <experiments>4</experiments>
</comment>
<comment type="interaction">
    <interactant intactId="EBI-746309">
        <id>Q92917</id>
    </interactant>
    <interactant intactId="EBI-2805516">
        <id>P31321</id>
        <label>PRKAR1B</label>
    </interactant>
    <organismsDiffer>false</organismsDiffer>
    <experiments>3</experiments>
</comment>
<comment type="interaction">
    <interactant intactId="EBI-746309">
        <id>Q92917</id>
    </interactant>
    <interactant intactId="EBI-4302903">
        <id>P51817</id>
        <label>PRKX</label>
    </interactant>
    <organismsDiffer>false</organismsDiffer>
    <experiments>2</experiments>
</comment>
<comment type="interaction">
    <interactant intactId="EBI-746309">
        <id>Q92917</id>
    </interactant>
    <interactant intactId="EBI-718395">
        <id>O43172</id>
        <label>PRPF4</label>
    </interactant>
    <organismsDiffer>false</organismsDiffer>
    <experiments>2</experiments>
</comment>
<comment type="interaction">
    <interactant intactId="EBI-746309">
        <id>Q92917</id>
    </interactant>
    <interactant intactId="EBI-538479">
        <id>Q6P2Q9</id>
        <label>PRPF8</label>
    </interactant>
    <organismsDiffer>false</organismsDiffer>
    <experiments>2</experiments>
</comment>
<comment type="interaction">
    <interactant intactId="EBI-746309">
        <id>Q92917</id>
    </interactant>
    <interactant intactId="EBI-721525">
        <id>P98175</id>
        <label>RBM10</label>
    </interactant>
    <organismsDiffer>false</organismsDiffer>
    <experiments>2</experiments>
</comment>
<comment type="interaction">
    <interactant intactId="EBI-746309">
        <id>Q92917</id>
    </interactant>
    <interactant intactId="EBI-10829018">
        <id>Q04864-2</id>
        <label>REL</label>
    </interactant>
    <organismsDiffer>false</organismsDiffer>
    <experiments>3</experiments>
</comment>
<comment type="interaction">
    <interactant intactId="EBI-746309">
        <id>Q92917</id>
    </interactant>
    <interactant intactId="EBI-1378139">
        <id>Q9HAT0</id>
        <label>ROPN1</label>
    </interactant>
    <organismsDiffer>false</organismsDiffer>
    <experiments>6</experiments>
</comment>
<comment type="interaction">
    <interactant intactId="EBI-746309">
        <id>Q92917</id>
    </interactant>
    <interactant intactId="EBI-10173690">
        <id>Q6FGM0</id>
        <label>SH3GL1</label>
    </interactant>
    <organismsDiffer>false</organismsDiffer>
    <experiments>3</experiments>
</comment>
<comment type="interaction">
    <interactant intactId="EBI-746309">
        <id>Q92917</id>
    </interactant>
    <interactant intactId="EBI-697911">
        <id>Q99961</id>
        <label>SH3GL1</label>
    </interactant>
    <organismsDiffer>false</organismsDiffer>
    <experiments>8</experiments>
</comment>
<comment type="interaction">
    <interactant intactId="EBI-746309">
        <id>Q92917</id>
    </interactant>
    <interactant intactId="EBI-741237">
        <id>O60504</id>
        <label>SORBS3</label>
    </interactant>
    <organismsDiffer>false</organismsDiffer>
    <experiments>3</experiments>
</comment>
<comment type="interaction">
    <interactant intactId="EBI-746309">
        <id>Q92917</id>
    </interactant>
    <interactant intactId="EBI-12047907">
        <id>A6NLX3</id>
        <label>SPDYE4</label>
    </interactant>
    <organismsDiffer>false</organismsDiffer>
    <experiments>3</experiments>
</comment>
<comment type="interaction">
    <interactant intactId="EBI-746309">
        <id>Q92917</id>
    </interactant>
    <interactant intactId="EBI-2608271">
        <id>P23193</id>
        <label>TCEA1</label>
    </interactant>
    <organismsDiffer>false</organismsDiffer>
    <experiments>3</experiments>
</comment>
<comment type="interaction">
    <interactant intactId="EBI-746309">
        <id>Q92917</id>
    </interactant>
    <interactant intactId="EBI-710310">
        <id>Q15560</id>
        <label>TCEA2</label>
    </interactant>
    <organismsDiffer>false</organismsDiffer>
    <experiments>7</experiments>
</comment>
<comment type="interaction">
    <interactant intactId="EBI-746309">
        <id>Q92917</id>
    </interactant>
    <interactant intactId="EBI-750109">
        <id>Q9NYB0</id>
        <label>TERF2IP</label>
    </interactant>
    <organismsDiffer>false</organismsDiffer>
    <experiments>2</experiments>
</comment>
<comment type="interaction">
    <interactant intactId="EBI-746309">
        <id>Q92917</id>
    </interactant>
    <interactant intactId="EBI-355744">
        <id>Q12933</id>
        <label>TRAF2</label>
    </interactant>
    <organismsDiffer>false</organismsDiffer>
    <experiments>7</experiments>
</comment>
<comment type="interaction">
    <interactant intactId="EBI-746309">
        <id>Q92917</id>
    </interactant>
    <interactant intactId="EBI-740098">
        <id>P36406</id>
        <label>TRIM23</label>
    </interactant>
    <organismsDiffer>false</organismsDiffer>
    <experiments>4</experiments>
</comment>
<comment type="interaction">
    <interactant intactId="EBI-746309">
        <id>Q92917</id>
    </interactant>
    <interactant intactId="EBI-719493">
        <id>P14373</id>
        <label>TRIM27</label>
    </interactant>
    <organismsDiffer>false</organismsDiffer>
    <experiments>3</experiments>
</comment>
<comment type="interaction">
    <interactant intactId="EBI-746309">
        <id>Q92917</id>
    </interactant>
    <interactant intactId="EBI-2799833">
        <id>Q8N1B4</id>
        <label>VPS52</label>
    </interactant>
    <organismsDiffer>false</organismsDiffer>
    <experiments>3</experiments>
</comment>
<comment type="interaction">
    <interactant intactId="EBI-746309">
        <id>Q92917</id>
    </interactant>
    <interactant intactId="EBI-12030590">
        <id>Q9H0C1</id>
        <label>ZMYND12</label>
    </interactant>
    <organismsDiffer>false</organismsDiffer>
    <experiments>3</experiments>
</comment>
<comment type="interaction">
    <interactant intactId="EBI-746309">
        <id>Q92917</id>
    </interactant>
    <interactant intactId="EBI-527853">
        <id>Q9UGI0</id>
        <label>ZRANB1</label>
    </interactant>
    <organismsDiffer>false</organismsDiffer>
    <experiments>3</experiments>
</comment>
<comment type="subcellular location">
    <subcellularLocation>
        <location evidence="4 5">Nucleus</location>
    </subcellularLocation>
</comment>
<comment type="PTM">
    <text evidence="4">Phosphorylation regulates its ability to bind RNA.</text>
</comment>
<comment type="similarity">
    <text evidence="7">Belongs to the MOS2 family.</text>
</comment>
<comment type="sequence caution" evidence="7">
    <conflict type="frameshift">
        <sequence resource="EMBL-CDS" id="AAB18640"/>
    </conflict>
</comment>
<name>GPKOW_HUMAN</name>
<keyword id="KW-0002">3D-structure</keyword>
<keyword id="KW-0007">Acetylation</keyword>
<keyword id="KW-1017">Isopeptide bond</keyword>
<keyword id="KW-0507">mRNA processing</keyword>
<keyword id="KW-0508">mRNA splicing</keyword>
<keyword id="KW-0539">Nucleus</keyword>
<keyword id="KW-0597">Phosphoprotein</keyword>
<keyword id="KW-1267">Proteomics identification</keyword>
<keyword id="KW-1185">Reference proteome</keyword>
<keyword id="KW-0677">Repeat</keyword>
<keyword id="KW-0694">RNA-binding</keyword>
<keyword id="KW-0832">Ubl conjugation</keyword>
<feature type="initiator methionine" description="Removed" evidence="13">
    <location>
        <position position="1"/>
    </location>
</feature>
<feature type="chain" id="PRO_0000087559" description="G-patch domain and KOW motifs-containing protein">
    <location>
        <begin position="2"/>
        <end position="476"/>
    </location>
</feature>
<feature type="domain" description="G-patch" evidence="1">
    <location>
        <begin position="164"/>
        <end position="210"/>
    </location>
</feature>
<feature type="domain" description="KOW 1">
    <location>
        <begin position="240"/>
        <end position="267"/>
    </location>
</feature>
<feature type="domain" description="KOW 2">
    <location>
        <begin position="415"/>
        <end position="442"/>
    </location>
</feature>
<feature type="region of interest" description="Disordered" evidence="2">
    <location>
        <begin position="1"/>
        <end position="96"/>
    </location>
</feature>
<feature type="region of interest" description="Disordered" evidence="2">
    <location>
        <begin position="203"/>
        <end position="244"/>
    </location>
</feature>
<feature type="region of interest" description="Disordered" evidence="2">
    <location>
        <begin position="327"/>
        <end position="353"/>
    </location>
</feature>
<feature type="compositionally biased region" description="Polar residues" evidence="2">
    <location>
        <begin position="13"/>
        <end position="26"/>
    </location>
</feature>
<feature type="compositionally biased region" description="Basic and acidic residues" evidence="2">
    <location>
        <begin position="43"/>
        <end position="58"/>
    </location>
</feature>
<feature type="compositionally biased region" description="Polar residues" evidence="2">
    <location>
        <begin position="210"/>
        <end position="219"/>
    </location>
</feature>
<feature type="compositionally biased region" description="Basic and acidic residues" evidence="2">
    <location>
        <begin position="224"/>
        <end position="237"/>
    </location>
</feature>
<feature type="compositionally biased region" description="Basic and acidic residues" evidence="2">
    <location>
        <begin position="337"/>
        <end position="351"/>
    </location>
</feature>
<feature type="modified residue" description="N-acetylalanine" evidence="13">
    <location>
        <position position="2"/>
    </location>
</feature>
<feature type="modified residue" description="Phosphoserine; by PKA" evidence="4">
    <location>
        <position position="27"/>
    </location>
</feature>
<feature type="modified residue" description="Phosphoserine" evidence="14">
    <location>
        <position position="35"/>
    </location>
</feature>
<feature type="modified residue" description="Phosphoserine" evidence="10 12 14">
    <location>
        <position position="42"/>
    </location>
</feature>
<feature type="modified residue" description="Phosphoserine" evidence="14">
    <location>
        <position position="115"/>
    </location>
</feature>
<feature type="modified residue" description="Phosphothreonine" evidence="10 11 12 15">
    <location>
        <position position="216"/>
    </location>
</feature>
<feature type="modified residue" description="Phosphothreonine; by PKA" evidence="4">
    <location>
        <position position="316"/>
    </location>
</feature>
<feature type="modified residue" description="Phosphoserine" evidence="15">
    <location>
        <position position="471"/>
    </location>
</feature>
<feature type="modified residue" description="Phosphothreonine" evidence="15">
    <location>
        <position position="473"/>
    </location>
</feature>
<feature type="cross-link" description="Glycyl lysine isopeptide (Lys-Gly) (interchain with G-Cter in SUMO2)" evidence="16">
    <location>
        <position position="5"/>
    </location>
</feature>
<feature type="mutagenesis site" description="Reduced phosphorylation. Significant loss of phosphorylation and increased RNA-binding; when associated with A-316." evidence="4">
    <original>S</original>
    <variation>A</variation>
    <location>
        <position position="27"/>
    </location>
</feature>
<feature type="mutagenesis site" description="Significant loss of interaction with DHX16. No loss of pre-mRNA splicing activity. Able to suppress the splicing defect observed in dominant-negative DHX16 mutant expressing cells." evidence="5">
    <original>GW</original>
    <variation>AA</variation>
    <location>
        <begin position="176"/>
        <end position="177"/>
    </location>
</feature>
<feature type="mutagenesis site" description="No loss of interaction with DHX16. Reduced pre-mRNA splicing activity. Decreased ability to suppress the splicing defect observed in dominant-negative DHX16 mutant expressing cells." evidence="5">
    <original>GK</original>
    <variation>AA</variation>
    <location>
        <begin position="259"/>
        <end position="260"/>
    </location>
</feature>
<feature type="mutagenesis site" description="Reduced phosphorylation. Significant loss of phosphorylation and increased RNA-binding; when associated with A-27." evidence="4">
    <original>T</original>
    <variation>A</variation>
    <location>
        <position position="316"/>
    </location>
</feature>
<feature type="sequence conflict" description="In Ref. 3; BAD93043." evidence="7" ref="3">
    <original>L</original>
    <variation>F</variation>
    <location>
        <position position="317"/>
    </location>
</feature>
<feature type="strand" evidence="17">
    <location>
        <begin position="20"/>
        <end position="22"/>
    </location>
</feature>
<feature type="helix" evidence="18">
    <location>
        <begin position="102"/>
        <end position="135"/>
    </location>
</feature>
<feature type="turn" evidence="18">
    <location>
        <begin position="163"/>
        <end position="166"/>
    </location>
</feature>
<feature type="helix" evidence="18">
    <location>
        <begin position="167"/>
        <end position="175"/>
    </location>
</feature>
<feature type="turn" evidence="18">
    <location>
        <begin position="179"/>
        <end position="182"/>
    </location>
</feature>
<evidence type="ECO:0000255" key="1">
    <source>
        <dbReference type="PROSITE-ProRule" id="PRU00092"/>
    </source>
</evidence>
<evidence type="ECO:0000256" key="2">
    <source>
        <dbReference type="SAM" id="MobiDB-lite"/>
    </source>
</evidence>
<evidence type="ECO:0000269" key="3">
    <source>
    </source>
</evidence>
<evidence type="ECO:0000269" key="4">
    <source>
    </source>
</evidence>
<evidence type="ECO:0000269" key="5">
    <source>
    </source>
</evidence>
<evidence type="ECO:0000269" key="6">
    <source>
    </source>
</evidence>
<evidence type="ECO:0000305" key="7"/>
<evidence type="ECO:0000305" key="8">
    <source>
    </source>
</evidence>
<evidence type="ECO:0007744" key="9">
    <source>
        <dbReference type="PDB" id="7DVQ"/>
    </source>
</evidence>
<evidence type="ECO:0007744" key="10">
    <source>
    </source>
</evidence>
<evidence type="ECO:0007744" key="11">
    <source>
    </source>
</evidence>
<evidence type="ECO:0007744" key="12">
    <source>
    </source>
</evidence>
<evidence type="ECO:0007744" key="13">
    <source>
    </source>
</evidence>
<evidence type="ECO:0007744" key="14">
    <source>
    </source>
</evidence>
<evidence type="ECO:0007744" key="15">
    <source>
    </source>
</evidence>
<evidence type="ECO:0007744" key="16">
    <source>
    </source>
</evidence>
<evidence type="ECO:0007829" key="17">
    <source>
        <dbReference type="PDB" id="7DVQ"/>
    </source>
</evidence>
<evidence type="ECO:0007829" key="18">
    <source>
        <dbReference type="PDB" id="7QTT"/>
    </source>
</evidence>
<proteinExistence type="evidence at protein level"/>
<gene>
    <name type="primary">GPKOW</name>
    <name type="synonym">GPATC5</name>
    <name type="synonym">GPATCH5</name>
    <name type="synonym">T54</name>
</gene>
<organism>
    <name type="scientific">Homo sapiens</name>
    <name type="common">Human</name>
    <dbReference type="NCBI Taxonomy" id="9606"/>
    <lineage>
        <taxon>Eukaryota</taxon>
        <taxon>Metazoa</taxon>
        <taxon>Chordata</taxon>
        <taxon>Craniata</taxon>
        <taxon>Vertebrata</taxon>
        <taxon>Euteleostomi</taxon>
        <taxon>Mammalia</taxon>
        <taxon>Eutheria</taxon>
        <taxon>Euarchontoglires</taxon>
        <taxon>Primates</taxon>
        <taxon>Haplorrhini</taxon>
        <taxon>Catarrhini</taxon>
        <taxon>Hominidae</taxon>
        <taxon>Homo</taxon>
    </lineage>
</organism>
<dbReference type="EMBL" id="U66359">
    <property type="protein sequence ID" value="AAB18640.1"/>
    <property type="status" value="ALT_SEQ"/>
    <property type="molecule type" value="mRNA"/>
</dbReference>
<dbReference type="EMBL" id="BC000397">
    <property type="protein sequence ID" value="AAH00397.1"/>
    <property type="molecule type" value="mRNA"/>
</dbReference>
<dbReference type="EMBL" id="BC003148">
    <property type="protein sequence ID" value="AAH03148.1"/>
    <property type="molecule type" value="mRNA"/>
</dbReference>
<dbReference type="EMBL" id="AB209806">
    <property type="protein sequence ID" value="BAD93043.1"/>
    <property type="molecule type" value="mRNA"/>
</dbReference>
<dbReference type="CCDS" id="CCDS35251.1"/>
<dbReference type="RefSeq" id="NP_056513.2">
    <property type="nucleotide sequence ID" value="NM_015698.5"/>
</dbReference>
<dbReference type="PDB" id="7DVQ">
    <property type="method" value="EM"/>
    <property type="resolution" value="2.89 A"/>
    <property type="chains" value="y=1-476"/>
</dbReference>
<dbReference type="PDB" id="7QTT">
    <property type="method" value="EM"/>
    <property type="resolution" value="3.10 A"/>
    <property type="chains" value="G=1-476"/>
</dbReference>
<dbReference type="PDB" id="8CH6">
    <property type="method" value="EM"/>
    <property type="resolution" value="5.90 A"/>
    <property type="chains" value="G=1-476"/>
</dbReference>
<dbReference type="PDBsum" id="7DVQ"/>
<dbReference type="PDBsum" id="7QTT"/>
<dbReference type="PDBsum" id="8CH6"/>
<dbReference type="EMDB" id="EMD-14146"/>
<dbReference type="EMDB" id="EMD-16658"/>
<dbReference type="EMDB" id="EMD-30875"/>
<dbReference type="SMR" id="Q92917"/>
<dbReference type="BioGRID" id="118086">
    <property type="interactions" value="156"/>
</dbReference>
<dbReference type="FunCoup" id="Q92917">
    <property type="interactions" value="3635"/>
</dbReference>
<dbReference type="IntAct" id="Q92917">
    <property type="interactions" value="834"/>
</dbReference>
<dbReference type="MINT" id="Q92917"/>
<dbReference type="STRING" id="9606.ENSP00000156109"/>
<dbReference type="GlyCosmos" id="Q92917">
    <property type="glycosylation" value="2 sites, 1 glycan"/>
</dbReference>
<dbReference type="GlyGen" id="Q92917">
    <property type="glycosylation" value="4 sites, 1 O-linked glycan (4 sites)"/>
</dbReference>
<dbReference type="iPTMnet" id="Q92917"/>
<dbReference type="MetOSite" id="Q92917"/>
<dbReference type="PhosphoSitePlus" id="Q92917"/>
<dbReference type="BioMuta" id="GPKOW"/>
<dbReference type="DMDM" id="134048659"/>
<dbReference type="jPOST" id="Q92917"/>
<dbReference type="MassIVE" id="Q92917"/>
<dbReference type="PaxDb" id="9606-ENSP00000156109"/>
<dbReference type="PeptideAtlas" id="Q92917"/>
<dbReference type="ProteomicsDB" id="75602"/>
<dbReference type="Pumba" id="Q92917"/>
<dbReference type="Antibodypedia" id="340">
    <property type="antibodies" value="180 antibodies from 28 providers"/>
</dbReference>
<dbReference type="DNASU" id="27238"/>
<dbReference type="Ensembl" id="ENST00000156109.7">
    <property type="protein sequence ID" value="ENSP00000156109.5"/>
    <property type="gene ID" value="ENSG00000068394.11"/>
</dbReference>
<dbReference type="Ensembl" id="ENST00000710028.1">
    <property type="protein sequence ID" value="ENSP00000518004.1"/>
    <property type="gene ID" value="ENSG00000292204.1"/>
</dbReference>
<dbReference type="GeneID" id="27238"/>
<dbReference type="KEGG" id="hsa:27238"/>
<dbReference type="MANE-Select" id="ENST00000156109.7">
    <property type="protein sequence ID" value="ENSP00000156109.5"/>
    <property type="RefSeq nucleotide sequence ID" value="NM_015698.6"/>
    <property type="RefSeq protein sequence ID" value="NP_056513.2"/>
</dbReference>
<dbReference type="UCSC" id="uc004dmr.5">
    <property type="organism name" value="human"/>
</dbReference>
<dbReference type="AGR" id="HGNC:30677"/>
<dbReference type="CTD" id="27238"/>
<dbReference type="DisGeNET" id="27238"/>
<dbReference type="GeneCards" id="GPKOW"/>
<dbReference type="HGNC" id="HGNC:30677">
    <property type="gene designation" value="GPKOW"/>
</dbReference>
<dbReference type="HPA" id="ENSG00000068394">
    <property type="expression patterns" value="Low tissue specificity"/>
</dbReference>
<dbReference type="MalaCards" id="GPKOW"/>
<dbReference type="MIM" id="301003">
    <property type="type" value="gene"/>
</dbReference>
<dbReference type="neXtProt" id="NX_Q92917"/>
<dbReference type="OpenTargets" id="ENSG00000068394"/>
<dbReference type="Orphanet" id="2570">
    <property type="disease" value="Lethal intrauterine growth restriction-cortical malformation-congenital contractures syndrome"/>
</dbReference>
<dbReference type="PharmGKB" id="PA134956055"/>
<dbReference type="VEuPathDB" id="HostDB:ENSG00000068394"/>
<dbReference type="eggNOG" id="KOG4315">
    <property type="taxonomic scope" value="Eukaryota"/>
</dbReference>
<dbReference type="GeneTree" id="ENSGT00390000015154"/>
<dbReference type="HOGENOM" id="CLU_045183_1_0_1"/>
<dbReference type="InParanoid" id="Q92917"/>
<dbReference type="OMA" id="AHKDKEK"/>
<dbReference type="OrthoDB" id="5577072at2759"/>
<dbReference type="PAN-GO" id="Q92917">
    <property type="GO annotations" value="2 GO annotations based on evolutionary models"/>
</dbReference>
<dbReference type="PhylomeDB" id="Q92917"/>
<dbReference type="TreeFam" id="TF316786"/>
<dbReference type="PathwayCommons" id="Q92917"/>
<dbReference type="Reactome" id="R-HSA-72163">
    <property type="pathway name" value="mRNA Splicing - Major Pathway"/>
</dbReference>
<dbReference type="SignaLink" id="Q92917"/>
<dbReference type="SIGNOR" id="Q92917"/>
<dbReference type="BioGRID-ORCS" id="27238">
    <property type="hits" value="415 hits in 784 CRISPR screens"/>
</dbReference>
<dbReference type="GenomeRNAi" id="27238"/>
<dbReference type="Pharos" id="Q92917">
    <property type="development level" value="Tbio"/>
</dbReference>
<dbReference type="PRO" id="PR:Q92917"/>
<dbReference type="Proteomes" id="UP000005640">
    <property type="component" value="Chromosome X"/>
</dbReference>
<dbReference type="RNAct" id="Q92917">
    <property type="molecule type" value="protein"/>
</dbReference>
<dbReference type="Bgee" id="ENSG00000068394">
    <property type="expression patterns" value="Expressed in paraflocculus and 195 other cell types or tissues"/>
</dbReference>
<dbReference type="GO" id="GO:0005654">
    <property type="term" value="C:nucleoplasm"/>
    <property type="evidence" value="ECO:0000314"/>
    <property type="project" value="HPA"/>
</dbReference>
<dbReference type="GO" id="GO:0005634">
    <property type="term" value="C:nucleus"/>
    <property type="evidence" value="ECO:0000314"/>
    <property type="project" value="UniProtKB"/>
</dbReference>
<dbReference type="GO" id="GO:0005681">
    <property type="term" value="C:spliceosomal complex"/>
    <property type="evidence" value="ECO:0000314"/>
    <property type="project" value="UniProtKB"/>
</dbReference>
<dbReference type="GO" id="GO:0003723">
    <property type="term" value="F:RNA binding"/>
    <property type="evidence" value="ECO:0000314"/>
    <property type="project" value="UniProtKB"/>
</dbReference>
<dbReference type="GO" id="GO:0000398">
    <property type="term" value="P:mRNA splicing, via spliceosome"/>
    <property type="evidence" value="ECO:0000315"/>
    <property type="project" value="UniProtKB"/>
</dbReference>
<dbReference type="CDD" id="cd13152">
    <property type="entry name" value="KOW_GPKOW_A"/>
    <property type="match status" value="1"/>
</dbReference>
<dbReference type="CDD" id="cd13153">
    <property type="entry name" value="KOW_GPKOW_B"/>
    <property type="match status" value="1"/>
</dbReference>
<dbReference type="Gene3D" id="2.30.30.30">
    <property type="match status" value="2"/>
</dbReference>
<dbReference type="InterPro" id="IPR000467">
    <property type="entry name" value="G_patch_dom"/>
</dbReference>
<dbReference type="InterPro" id="IPR041993">
    <property type="entry name" value="GPKOW_KOW1"/>
</dbReference>
<dbReference type="InterPro" id="IPR041994">
    <property type="entry name" value="GPKOW_KOW2"/>
</dbReference>
<dbReference type="InterPro" id="IPR005824">
    <property type="entry name" value="KOW"/>
</dbReference>
<dbReference type="InterPro" id="IPR014722">
    <property type="entry name" value="Rib_uL2_dom2"/>
</dbReference>
<dbReference type="InterPro" id="IPR045166">
    <property type="entry name" value="Spp2-like"/>
</dbReference>
<dbReference type="InterPro" id="IPR026822">
    <property type="entry name" value="Spp2/MOS2_G-patch"/>
</dbReference>
<dbReference type="PANTHER" id="PTHR15818">
    <property type="entry name" value="G PATCH AND KOW-CONTAINING"/>
    <property type="match status" value="1"/>
</dbReference>
<dbReference type="PANTHER" id="PTHR15818:SF2">
    <property type="entry name" value="G-PATCH DOMAIN AND KOW MOTIFS-CONTAINING PROTEIN"/>
    <property type="match status" value="1"/>
</dbReference>
<dbReference type="Pfam" id="PF12656">
    <property type="entry name" value="G-patch_2"/>
    <property type="match status" value="1"/>
</dbReference>
<dbReference type="Pfam" id="PF25088">
    <property type="entry name" value="GPKOW_C"/>
    <property type="match status" value="1"/>
</dbReference>
<dbReference type="Pfam" id="PF00467">
    <property type="entry name" value="KOW"/>
    <property type="match status" value="1"/>
</dbReference>
<dbReference type="SMART" id="SM00443">
    <property type="entry name" value="G_patch"/>
    <property type="match status" value="1"/>
</dbReference>
<dbReference type="SMART" id="SM00739">
    <property type="entry name" value="KOW"/>
    <property type="match status" value="2"/>
</dbReference>
<dbReference type="PROSITE" id="PS50174">
    <property type="entry name" value="G_PATCH"/>
    <property type="match status" value="1"/>
</dbReference>
<accession>Q92917</accession>
<accession>Q59EK5</accession>
<accession>Q9BQA8</accession>
<reference key="1">
    <citation type="journal article" date="1996" name="Genome Res.">
        <title>Long-range map of a 3.5-Mb region in Xp11.23-22 with a sequence-ready map from a 1.1-Mb gene-rich interval.</title>
        <authorList>
            <person name="Schindelhauer D."/>
            <person name="Hellebrand H."/>
            <person name="Grimm L."/>
            <person name="Bader I."/>
            <person name="Meitinger T."/>
            <person name="Wehnert M."/>
            <person name="Ross M."/>
            <person name="Meindl A."/>
        </authorList>
    </citation>
    <scope>NUCLEOTIDE SEQUENCE [MRNA]</scope>
</reference>
<reference key="2">
    <citation type="journal article" date="2004" name="Genome Res.">
        <title>The status, quality, and expansion of the NIH full-length cDNA project: the Mammalian Gene Collection (MGC).</title>
        <authorList>
            <consortium name="The MGC Project Team"/>
        </authorList>
    </citation>
    <scope>NUCLEOTIDE SEQUENCE [LARGE SCALE MRNA]</scope>
    <source>
        <tissue>Lung</tissue>
    </source>
</reference>
<reference key="3">
    <citation type="submission" date="2005-03" db="EMBL/GenBank/DDBJ databases">
        <authorList>
            <person name="Totoki Y."/>
            <person name="Toyoda A."/>
            <person name="Takeda T."/>
            <person name="Sakaki Y."/>
            <person name="Tanaka A."/>
            <person name="Yokoyama S."/>
            <person name="Ohara O."/>
            <person name="Nagase T."/>
            <person name="Kikuno R.F."/>
        </authorList>
    </citation>
    <scope>NUCLEOTIDE SEQUENCE [LARGE SCALE MRNA] OF 2-476</scope>
    <source>
        <tissue>Brain</tissue>
    </source>
</reference>
<reference key="4">
    <citation type="journal article" date="2005" name="Curr. Biol.">
        <title>MOS2, a protein containing G-patch and KOW motifs, is essential for innate immunity in Arabidopsis thaliana.</title>
        <authorList>
            <person name="Zhang Y."/>
            <person name="Cheng Y.T."/>
            <person name="Bi D."/>
            <person name="Palma K."/>
            <person name="Li X."/>
        </authorList>
    </citation>
    <scope>IDENTIFICATION</scope>
</reference>
<reference key="5">
    <citation type="journal article" date="2006" name="Cell">
        <title>Global, in vivo, and site-specific phosphorylation dynamics in signaling networks.</title>
        <authorList>
            <person name="Olsen J.V."/>
            <person name="Blagoev B."/>
            <person name="Gnad F."/>
            <person name="Macek B."/>
            <person name="Kumar C."/>
            <person name="Mortensen P."/>
            <person name="Mann M."/>
        </authorList>
    </citation>
    <scope>IDENTIFICATION BY MASS SPECTROMETRY [LARGE SCALE ANALYSIS]</scope>
    <source>
        <tissue>Cervix carcinoma</tissue>
    </source>
</reference>
<reference key="6">
    <citation type="journal article" date="2006" name="Oncogene">
        <title>Smad6 is a protein kinase X phosphorylation substrate and is required for HL-60 cell differentiation.</title>
        <authorList>
            <person name="Glesne D."/>
            <person name="Huberman E."/>
        </authorList>
    </citation>
    <scope>INTERACTION WITH PRKX</scope>
</reference>
<reference key="7">
    <citation type="journal article" date="2008" name="J. Proteome Res.">
        <title>Combining protein-based IMAC, peptide-based IMAC, and MudPIT for efficient phosphoproteomic analysis.</title>
        <authorList>
            <person name="Cantin G.T."/>
            <person name="Yi W."/>
            <person name="Lu B."/>
            <person name="Park S.K."/>
            <person name="Xu T."/>
            <person name="Lee J.-D."/>
            <person name="Yates J.R. III"/>
        </authorList>
    </citation>
    <scope>IDENTIFICATION BY MASS SPECTROMETRY [LARGE SCALE ANALYSIS]</scope>
    <source>
        <tissue>Cervix carcinoma</tissue>
    </source>
</reference>
<reference key="8">
    <citation type="journal article" date="2008" name="Proc. Natl. Acad. Sci. U.S.A.">
        <title>A quantitative atlas of mitotic phosphorylation.</title>
        <authorList>
            <person name="Dephoure N."/>
            <person name="Zhou C."/>
            <person name="Villen J."/>
            <person name="Beausoleil S.A."/>
            <person name="Bakalarski C.E."/>
            <person name="Elledge S.J."/>
            <person name="Gygi S.P."/>
        </authorList>
    </citation>
    <scope>PHOSPHORYLATION [LARGE SCALE ANALYSIS] AT SER-42 AND THR-216</scope>
    <scope>IDENTIFICATION BY MASS SPECTROMETRY [LARGE SCALE ANALYSIS]</scope>
    <source>
        <tissue>Cervix carcinoma</tissue>
    </source>
</reference>
<reference key="9">
    <citation type="journal article" date="2009" name="Anal. Chem.">
        <title>Lys-N and trypsin cover complementary parts of the phosphoproteome in a refined SCX-based approach.</title>
        <authorList>
            <person name="Gauci S."/>
            <person name="Helbig A.O."/>
            <person name="Slijper M."/>
            <person name="Krijgsveld J."/>
            <person name="Heck A.J."/>
            <person name="Mohammed S."/>
        </authorList>
    </citation>
    <scope>IDENTIFICATION BY MASS SPECTROMETRY [LARGE SCALE ANALYSIS]</scope>
</reference>
<reference key="10">
    <citation type="journal article" date="2009" name="Sci. Signal.">
        <title>Quantitative phosphoproteomic analysis of T cell receptor signaling reveals system-wide modulation of protein-protein interactions.</title>
        <authorList>
            <person name="Mayya V."/>
            <person name="Lundgren D.H."/>
            <person name="Hwang S.-I."/>
            <person name="Rezaul K."/>
            <person name="Wu L."/>
            <person name="Eng J.K."/>
            <person name="Rodionov V."/>
            <person name="Han D.K."/>
        </authorList>
    </citation>
    <scope>PHOSPHORYLATION [LARGE SCALE ANALYSIS] AT THR-216</scope>
    <scope>IDENTIFICATION BY MASS SPECTROMETRY [LARGE SCALE ANALYSIS]</scope>
    <source>
        <tissue>Leukemic T-cell</tissue>
    </source>
</reference>
<reference key="11">
    <citation type="journal article" date="2010" name="Sci. Signal.">
        <title>Quantitative phosphoproteomics reveals widespread full phosphorylation site occupancy during mitosis.</title>
        <authorList>
            <person name="Olsen J.V."/>
            <person name="Vermeulen M."/>
            <person name="Santamaria A."/>
            <person name="Kumar C."/>
            <person name="Miller M.L."/>
            <person name="Jensen L.J."/>
            <person name="Gnad F."/>
            <person name="Cox J."/>
            <person name="Jensen T.S."/>
            <person name="Nigg E.A."/>
            <person name="Brunak S."/>
            <person name="Mann M."/>
        </authorList>
    </citation>
    <scope>PHOSPHORYLATION [LARGE SCALE ANALYSIS] AT SER-42 AND THR-216</scope>
    <scope>IDENTIFICATION BY MASS SPECTROMETRY [LARGE SCALE ANALYSIS]</scope>
    <source>
        <tissue>Cervix carcinoma</tissue>
    </source>
</reference>
<reference key="12">
    <citation type="journal article" date="2011" name="BMC Syst. Biol.">
        <title>Initial characterization of the human central proteome.</title>
        <authorList>
            <person name="Burkard T.R."/>
            <person name="Planyavsky M."/>
            <person name="Kaupe I."/>
            <person name="Breitwieser F.P."/>
            <person name="Buerckstuemmer T."/>
            <person name="Bennett K.L."/>
            <person name="Superti-Furga G."/>
            <person name="Colinge J."/>
        </authorList>
    </citation>
    <scope>IDENTIFICATION BY MASS SPECTROMETRY [LARGE SCALE ANALYSIS]</scope>
</reference>
<reference key="13">
    <citation type="journal article" date="2011" name="J. Mol. Signal.">
        <title>G-patch domain and KOW motifs-containing protein, GPKOW; a nuclear RNA-binding protein regulated by protein kinase A.</title>
        <authorList>
            <person name="Aksaas A.K."/>
            <person name="Larsen A.C."/>
            <person name="Rogne M."/>
            <person name="Rosendal K."/>
            <person name="Kvissel A.K."/>
            <person name="Skaalhegg B.S."/>
        </authorList>
    </citation>
    <scope>PHOSPHORYLATION AT SER-27 AND THR-316</scope>
    <scope>MUTAGENESIS OF SER-27 AND THR-316</scope>
    <scope>INTERACTION WITH PRKACB</scope>
    <scope>SUBCELLULAR LOCATION</scope>
</reference>
<reference key="14">
    <citation type="journal article" date="2012" name="Proc. Natl. Acad. Sci. U.S.A.">
        <title>N-terminal acetylome analyses and functional insights of the N-terminal acetyltransferase NatB.</title>
        <authorList>
            <person name="Van Damme P."/>
            <person name="Lasa M."/>
            <person name="Polevoda B."/>
            <person name="Gazquez C."/>
            <person name="Elosegui-Artola A."/>
            <person name="Kim D.S."/>
            <person name="De Juan-Pardo E."/>
            <person name="Demeyer K."/>
            <person name="Hole K."/>
            <person name="Larrea E."/>
            <person name="Timmerman E."/>
            <person name="Prieto J."/>
            <person name="Arnesen T."/>
            <person name="Sherman F."/>
            <person name="Gevaert K."/>
            <person name="Aldabe R."/>
        </authorList>
    </citation>
    <scope>ACETYLATION [LARGE SCALE ANALYSIS] AT ALA-2</scope>
    <scope>CLEAVAGE OF INITIATOR METHIONINE [LARGE SCALE ANALYSIS]</scope>
    <scope>IDENTIFICATION BY MASS SPECTROMETRY [LARGE SCALE ANALYSIS]</scope>
</reference>
<reference key="15">
    <citation type="journal article" date="2013" name="J. Proteome Res.">
        <title>Toward a comprehensive characterization of a human cancer cell phosphoproteome.</title>
        <authorList>
            <person name="Zhou H."/>
            <person name="Di Palma S."/>
            <person name="Preisinger C."/>
            <person name="Peng M."/>
            <person name="Polat A.N."/>
            <person name="Heck A.J."/>
            <person name="Mohammed S."/>
        </authorList>
    </citation>
    <scope>PHOSPHORYLATION [LARGE SCALE ANALYSIS] AT SER-35; SER-42 AND SER-115</scope>
    <scope>IDENTIFICATION BY MASS SPECTROMETRY [LARGE SCALE ANALYSIS]</scope>
    <source>
        <tissue>Cervix carcinoma</tissue>
        <tissue>Erythroleukemia</tissue>
    </source>
</reference>
<reference key="16">
    <citation type="journal article" date="2014" name="Biosci. Rep.">
        <title>GPKOW is essential for pre-mRNA splicing in vitro and suppresses splicing defect caused by dominant-negative DHX16 mutation in vivo.</title>
        <authorList>
            <person name="Zang S."/>
            <person name="Lin T.Y."/>
            <person name="Chen X."/>
            <person name="Gencheva M."/>
            <person name="Newo A.N."/>
            <person name="Yang L."/>
            <person name="Rossi D."/>
            <person name="Hu J."/>
            <person name="Lin S.B."/>
            <person name="Huang A."/>
            <person name="Lin R.J."/>
        </authorList>
    </citation>
    <scope>FUNCTION</scope>
    <scope>SUBCELLULAR LOCATION</scope>
    <scope>INTERACTION WITH DHX16</scope>
    <scope>MUTAGENESIS OF 176-GLY--TRP-177 AND 259-GLY--LYS-260</scope>
</reference>
<reference key="17">
    <citation type="journal article" date="2014" name="J. Proteomics">
        <title>An enzyme assisted RP-RPLC approach for in-depth analysis of human liver phosphoproteome.</title>
        <authorList>
            <person name="Bian Y."/>
            <person name="Song C."/>
            <person name="Cheng K."/>
            <person name="Dong M."/>
            <person name="Wang F."/>
            <person name="Huang J."/>
            <person name="Sun D."/>
            <person name="Wang L."/>
            <person name="Ye M."/>
            <person name="Zou H."/>
        </authorList>
    </citation>
    <scope>PHOSPHORYLATION [LARGE SCALE ANALYSIS] AT THR-216; SER-471 AND THR-473</scope>
    <scope>IDENTIFICATION BY MASS SPECTROMETRY [LARGE SCALE ANALYSIS]</scope>
    <source>
        <tissue>Liver</tissue>
    </source>
</reference>
<reference key="18">
    <citation type="journal article" date="2017" name="Nat. Struct. Mol. Biol.">
        <title>Site-specific mapping of the human SUMO proteome reveals co-modification with phosphorylation.</title>
        <authorList>
            <person name="Hendriks I.A."/>
            <person name="Lyon D."/>
            <person name="Young C."/>
            <person name="Jensen L.J."/>
            <person name="Vertegaal A.C."/>
            <person name="Nielsen M.L."/>
        </authorList>
    </citation>
    <scope>SUMOYLATION [LARGE SCALE ANALYSIS] AT LYS-5</scope>
    <scope>IDENTIFICATION BY MASS SPECTROMETRY [LARGE SCALE ANALYSIS]</scope>
</reference>
<reference evidence="9" key="19">
    <citation type="journal article" date="2021" name="Science">
        <title>Structure of the activated human minor spliceosome.</title>
        <authorList>
            <person name="Bai R."/>
            <person name="Wan R."/>
            <person name="Wang L."/>
            <person name="Xu K."/>
            <person name="Zhang Q."/>
            <person name="Lei J."/>
            <person name="Shi Y."/>
        </authorList>
    </citation>
    <scope>STRUCTURE BY ELECTRON MICROSCOPY (2.89 ANGSTROMS)</scope>
    <scope>SUBUNIT</scope>
</reference>
<sequence>MADSKEGVLPLTAASTAPISFGFTRTSARRRLADSGDGAGPSPEEKDFLKTVEGRELQSVKPQEAPKELVIPLIQNGHRRQPPARPPGPSTDTGALADGVVSQAVKELIAESKKSLEERENAGVDPTLAIPMIQKGCTPSGEGADSEPRAETVPEEANYEAVPVEAYGLAMLRGMGWKPGEGIGRTFNQVVKPRVNSLRPKGLGLGANLTEAQALTPTGPSRMPRPDEEQEKDKEDQPQGLVPGGAVVVLSGPHRGLYGKVEGLDPDNVRAMVRLAVGSRVVTVSEYYLRPVSQQEFDKNTLDLRQQNGTASSRKTLWNQELYIQQDNSERKRKHLPDRQDGPAAKSEKAAPRSQHWLHRDLRVRFVDNMYKGGQYYNTKMIIEDVLSPDTCVCRTDEGRVLEGLREDMLETLVPKAEGDRVMVVLGPQTGRVGHLLSRDRARSRALVQLPRENQVVELHYDAICQYMGPSDTDDD</sequence>
<protein>
    <recommendedName>
        <fullName>G-patch domain and KOW motifs-containing protein</fullName>
    </recommendedName>
    <alternativeName>
        <fullName>G-patch domain-containing protein 5</fullName>
    </alternativeName>
    <alternativeName>
        <fullName>Protein MOS2 homolog</fullName>
    </alternativeName>
    <alternativeName>
        <fullName>Protein T54</fullName>
    </alternativeName>
</protein>